<accession>Q06AA5</accession>
<organism>
    <name type="scientific">Sus scrofa</name>
    <name type="common">Pig</name>
    <dbReference type="NCBI Taxonomy" id="9823"/>
    <lineage>
        <taxon>Eukaryota</taxon>
        <taxon>Metazoa</taxon>
        <taxon>Chordata</taxon>
        <taxon>Craniata</taxon>
        <taxon>Vertebrata</taxon>
        <taxon>Euteleostomi</taxon>
        <taxon>Mammalia</taxon>
        <taxon>Eutheria</taxon>
        <taxon>Laurasiatheria</taxon>
        <taxon>Artiodactyla</taxon>
        <taxon>Suina</taxon>
        <taxon>Suidae</taxon>
        <taxon>Sus</taxon>
    </lineage>
</organism>
<feature type="chain" id="PRO_0000375881" description="Tetraspanin-9">
    <location>
        <begin position="1"/>
        <end position="239"/>
    </location>
</feature>
<feature type="topological domain" description="Cytoplasmic" evidence="2">
    <location>
        <begin position="1"/>
        <end position="13"/>
    </location>
</feature>
<feature type="transmembrane region" description="Helical" evidence="2">
    <location>
        <begin position="14"/>
        <end position="34"/>
    </location>
</feature>
<feature type="topological domain" description="Extracellular" evidence="2">
    <location>
        <begin position="35"/>
        <end position="55"/>
    </location>
</feature>
<feature type="transmembrane region" description="Helical" evidence="2">
    <location>
        <begin position="56"/>
        <end position="76"/>
    </location>
</feature>
<feature type="topological domain" description="Cytoplasmic" evidence="2">
    <location>
        <begin position="77"/>
        <end position="85"/>
    </location>
</feature>
<feature type="transmembrane region" description="Helical" evidence="2">
    <location>
        <begin position="86"/>
        <end position="106"/>
    </location>
</feature>
<feature type="topological domain" description="Extracellular" evidence="2">
    <location>
        <begin position="107"/>
        <end position="203"/>
    </location>
</feature>
<feature type="transmembrane region" description="Helical" evidence="2">
    <location>
        <begin position="204"/>
        <end position="224"/>
    </location>
</feature>
<feature type="topological domain" description="Cytoplasmic" evidence="2">
    <location>
        <begin position="225"/>
        <end position="239"/>
    </location>
</feature>
<feature type="glycosylation site" description="N-linked (GlcNAc...) asparagine" evidence="2">
    <location>
        <position position="180"/>
    </location>
</feature>
<protein>
    <recommendedName>
        <fullName>Tetraspanin-9</fullName>
        <shortName>Tspan-9</shortName>
    </recommendedName>
</protein>
<keyword id="KW-0325">Glycoprotein</keyword>
<keyword id="KW-0472">Membrane</keyword>
<keyword id="KW-1185">Reference proteome</keyword>
<keyword id="KW-0812">Transmembrane</keyword>
<keyword id="KW-1133">Transmembrane helix</keyword>
<proteinExistence type="evidence at transcript level"/>
<gene>
    <name type="primary">TSPAN9</name>
</gene>
<sequence length="239" mass="26781">MARGCLCCLKYMMFLFNLIFWLCGCGLLGVGIWLSVSQGNFATFSPSFPSLSAANLVIAIGTIVMVTGFLGCLGAIKENRCLLLSFFIVLLIILLAELILIILFFVYMDKVNENARKDLKEGLLLYNSENNVGLKNAWNIIQAEMHCCGVTDYTDWYPVLGENTVPDRCCMENSQGCGRNSTTPLWKTGCYEKVKMWFDDNKHVLGTVGMCILIMQILGMAFSMTLFQHIHRTGKKYDA</sequence>
<evidence type="ECO:0000250" key="1"/>
<evidence type="ECO:0000255" key="2"/>
<evidence type="ECO:0000305" key="3"/>
<name>TSN9_PIG</name>
<reference key="1">
    <citation type="submission" date="2006-08" db="EMBL/GenBank/DDBJ databases">
        <authorList>
            <person name="Liu G.Y."/>
        </authorList>
    </citation>
    <scope>NUCLEOTIDE SEQUENCE [LARGE SCALE MRNA]</scope>
</reference>
<comment type="subunit">
    <text evidence="1">Found in a complex with GP6.</text>
</comment>
<comment type="subcellular location">
    <subcellularLocation>
        <location evidence="1">Membrane</location>
        <topology evidence="1">Multi-pass membrane protein</topology>
    </subcellularLocation>
    <text evidence="1">Colocalizes with GP6 in tetraspanin microdomains on the platelet surface.</text>
</comment>
<comment type="PTM">
    <text evidence="1">Glycosylated.</text>
</comment>
<comment type="similarity">
    <text evidence="3">Belongs to the tetraspanin (TM4SF) family.</text>
</comment>
<dbReference type="EMBL" id="DQ972959">
    <property type="protein sequence ID" value="ABI96195.1"/>
    <property type="molecule type" value="mRNA"/>
</dbReference>
<dbReference type="RefSeq" id="NP_001070694.1">
    <property type="nucleotide sequence ID" value="NM_001077226.1"/>
</dbReference>
<dbReference type="RefSeq" id="XP_005664127.1">
    <property type="nucleotide sequence ID" value="XM_005664070.3"/>
</dbReference>
<dbReference type="RefSeq" id="XP_013853281.1">
    <property type="nucleotide sequence ID" value="XM_013997827.2"/>
</dbReference>
<dbReference type="SMR" id="Q06AA5"/>
<dbReference type="FunCoup" id="Q06AA5">
    <property type="interactions" value="93"/>
</dbReference>
<dbReference type="STRING" id="9823.ENSSSCP00000050362"/>
<dbReference type="GlyCosmos" id="Q06AA5">
    <property type="glycosylation" value="1 site, No reported glycans"/>
</dbReference>
<dbReference type="GlyGen" id="Q06AA5">
    <property type="glycosylation" value="1 site"/>
</dbReference>
<dbReference type="PaxDb" id="9823-ENSSSCP00000000782"/>
<dbReference type="PeptideAtlas" id="Q06AA5"/>
<dbReference type="Ensembl" id="ENSSSCT00000000798.4">
    <property type="protein sequence ID" value="ENSSSCP00000000782.2"/>
    <property type="gene ID" value="ENSSSCG00000000735.5"/>
</dbReference>
<dbReference type="Ensembl" id="ENSSSCT00015060317.1">
    <property type="protein sequence ID" value="ENSSSCP00015024248.1"/>
    <property type="gene ID" value="ENSSSCG00015045122.1"/>
</dbReference>
<dbReference type="Ensembl" id="ENSSSCT00025008655.1">
    <property type="protein sequence ID" value="ENSSSCP00025003401.1"/>
    <property type="gene ID" value="ENSSSCG00025006547.1"/>
</dbReference>
<dbReference type="Ensembl" id="ENSSSCT00030007670.1">
    <property type="protein sequence ID" value="ENSSSCP00030003407.1"/>
    <property type="gene ID" value="ENSSSCG00030005625.1"/>
</dbReference>
<dbReference type="Ensembl" id="ENSSSCT00035015922.1">
    <property type="protein sequence ID" value="ENSSSCP00035005487.1"/>
    <property type="gene ID" value="ENSSSCG00035012623.1"/>
</dbReference>
<dbReference type="Ensembl" id="ENSSSCT00040030886.1">
    <property type="protein sequence ID" value="ENSSSCP00040012859.1"/>
    <property type="gene ID" value="ENSSSCG00040023030.1"/>
</dbReference>
<dbReference type="Ensembl" id="ENSSSCT00045047266.1">
    <property type="protein sequence ID" value="ENSSSCP00045032836.1"/>
    <property type="gene ID" value="ENSSSCG00045027673.1"/>
</dbReference>
<dbReference type="Ensembl" id="ENSSSCT00050098528.1">
    <property type="protein sequence ID" value="ENSSSCP00050042549.1"/>
    <property type="gene ID" value="ENSSSCG00050072191.1"/>
</dbReference>
<dbReference type="Ensembl" id="ENSSSCT00055028000.1">
    <property type="protein sequence ID" value="ENSSSCP00055022306.1"/>
    <property type="gene ID" value="ENSSSCG00055014115.1"/>
</dbReference>
<dbReference type="Ensembl" id="ENSSSCT00060095493.1">
    <property type="protein sequence ID" value="ENSSSCP00060041309.1"/>
    <property type="gene ID" value="ENSSSCG00060069845.1"/>
</dbReference>
<dbReference type="Ensembl" id="ENSSSCT00065033603.1">
    <property type="protein sequence ID" value="ENSSSCP00065013910.1"/>
    <property type="gene ID" value="ENSSSCG00065025113.1"/>
</dbReference>
<dbReference type="Ensembl" id="ENSSSCT00085022578">
    <property type="protein sequence ID" value="ENSSSCP00085015582"/>
    <property type="gene ID" value="ENSSSCG00085012017"/>
</dbReference>
<dbReference type="Ensembl" id="ENSSSCT00090044548">
    <property type="protein sequence ID" value="ENSSSCP00090027690"/>
    <property type="gene ID" value="ENSSSCG00090025195"/>
</dbReference>
<dbReference type="Ensembl" id="ENSSSCT00105022602">
    <property type="protein sequence ID" value="ENSSSCP00105016335"/>
    <property type="gene ID" value="ENSSSCG00105011349"/>
</dbReference>
<dbReference type="Ensembl" id="ENSSSCT00110049131">
    <property type="protein sequence ID" value="ENSSSCP00110034531"/>
    <property type="gene ID" value="ENSSSCG00110025465"/>
</dbReference>
<dbReference type="Ensembl" id="ENSSSCT00115027806">
    <property type="protein sequence ID" value="ENSSSCP00115026363"/>
    <property type="gene ID" value="ENSSSCG00115015902"/>
</dbReference>
<dbReference type="Ensembl" id="ENSSSCT00130039269">
    <property type="protein sequence ID" value="ENSSSCP00130027653"/>
    <property type="gene ID" value="ENSSSCG00130020249"/>
</dbReference>
<dbReference type="GeneID" id="768114"/>
<dbReference type="KEGG" id="ssc:768114"/>
<dbReference type="CTD" id="10867"/>
<dbReference type="VGNC" id="VGNC:94516">
    <property type="gene designation" value="TSPAN9"/>
</dbReference>
<dbReference type="eggNOG" id="KOG3882">
    <property type="taxonomic scope" value="Eukaryota"/>
</dbReference>
<dbReference type="GeneTree" id="ENSGT00940000158225"/>
<dbReference type="HOGENOM" id="CLU_055524_4_3_1"/>
<dbReference type="InParanoid" id="Q06AA5"/>
<dbReference type="OrthoDB" id="432835at2759"/>
<dbReference type="TreeFam" id="TF352892"/>
<dbReference type="Proteomes" id="UP000008227">
    <property type="component" value="Chromosome 5"/>
</dbReference>
<dbReference type="Proteomes" id="UP000314985">
    <property type="component" value="Unplaced"/>
</dbReference>
<dbReference type="Proteomes" id="UP000694570">
    <property type="component" value="Unplaced"/>
</dbReference>
<dbReference type="Proteomes" id="UP000694571">
    <property type="component" value="Unplaced"/>
</dbReference>
<dbReference type="Proteomes" id="UP000694720">
    <property type="component" value="Unplaced"/>
</dbReference>
<dbReference type="Proteomes" id="UP000694722">
    <property type="component" value="Unplaced"/>
</dbReference>
<dbReference type="Proteomes" id="UP000694723">
    <property type="component" value="Unplaced"/>
</dbReference>
<dbReference type="Proteomes" id="UP000694724">
    <property type="component" value="Unplaced"/>
</dbReference>
<dbReference type="Proteomes" id="UP000694725">
    <property type="component" value="Unplaced"/>
</dbReference>
<dbReference type="Proteomes" id="UP000694726">
    <property type="component" value="Unplaced"/>
</dbReference>
<dbReference type="Proteomes" id="UP000694727">
    <property type="component" value="Unplaced"/>
</dbReference>
<dbReference type="Proteomes" id="UP000694728">
    <property type="component" value="Unplaced"/>
</dbReference>
<dbReference type="Bgee" id="ENSSSCG00000000735">
    <property type="expression patterns" value="Expressed in cerebellum and 43 other cell types or tissues"/>
</dbReference>
<dbReference type="ExpressionAtlas" id="Q06AA5">
    <property type="expression patterns" value="baseline and differential"/>
</dbReference>
<dbReference type="GO" id="GO:0005886">
    <property type="term" value="C:plasma membrane"/>
    <property type="evidence" value="ECO:0000318"/>
    <property type="project" value="GO_Central"/>
</dbReference>
<dbReference type="CDD" id="cd03165">
    <property type="entry name" value="NET-5_like_LEL"/>
    <property type="match status" value="1"/>
</dbReference>
<dbReference type="FunFam" id="1.10.1450.10:FF:000008">
    <property type="entry name" value="Tetraspanin"/>
    <property type="match status" value="1"/>
</dbReference>
<dbReference type="Gene3D" id="1.10.1450.10">
    <property type="entry name" value="Tetraspanin"/>
    <property type="match status" value="1"/>
</dbReference>
<dbReference type="InterPro" id="IPR018499">
    <property type="entry name" value="Tetraspanin/Peripherin"/>
</dbReference>
<dbReference type="InterPro" id="IPR000301">
    <property type="entry name" value="Tetraspanin_animals"/>
</dbReference>
<dbReference type="InterPro" id="IPR018503">
    <property type="entry name" value="Tetraspanin_CS"/>
</dbReference>
<dbReference type="InterPro" id="IPR008952">
    <property type="entry name" value="Tetraspanin_EC2_sf"/>
</dbReference>
<dbReference type="PANTHER" id="PTHR19282">
    <property type="entry name" value="TETRASPANIN"/>
    <property type="match status" value="1"/>
</dbReference>
<dbReference type="PANTHER" id="PTHR19282:SF41">
    <property type="entry name" value="TETRASPANIN-9"/>
    <property type="match status" value="1"/>
</dbReference>
<dbReference type="Pfam" id="PF00335">
    <property type="entry name" value="Tetraspanin"/>
    <property type="match status" value="1"/>
</dbReference>
<dbReference type="PIRSF" id="PIRSF002419">
    <property type="entry name" value="Tetraspanin"/>
    <property type="match status" value="1"/>
</dbReference>
<dbReference type="PRINTS" id="PR00259">
    <property type="entry name" value="TMFOUR"/>
</dbReference>
<dbReference type="SUPFAM" id="SSF48652">
    <property type="entry name" value="Tetraspanin"/>
    <property type="match status" value="1"/>
</dbReference>
<dbReference type="PROSITE" id="PS00421">
    <property type="entry name" value="TM4_1"/>
    <property type="match status" value="1"/>
</dbReference>